<sequence length="273" mass="28783">MHDANIRVAIAGAGGRMGRQLIQAALALEGVQLGAALEREGSSLLGSDAGELAGAGKTGVTVQSSLDAVKDDFDVFIDFTRPEGTLNHLAFCRQHGKGMVIGTTGFDEAGKQAIRDAAADIAIVFAANFSVGVNVMLKLLEKAAKVMGDYTDIEIIEAHHRHKVDAPSGTALAMGEAIAHALDKDLKDCAVYSREGHTGERVPGTIGFATVRAGDIVGEHTAMFADIGERLEITHKASSRMTFANGAVRSALWLSGKENGLFDMRDVLNLNNL</sequence>
<name>DAPB_SHISS</name>
<organism>
    <name type="scientific">Shigella sonnei (strain Ss046)</name>
    <dbReference type="NCBI Taxonomy" id="300269"/>
    <lineage>
        <taxon>Bacteria</taxon>
        <taxon>Pseudomonadati</taxon>
        <taxon>Pseudomonadota</taxon>
        <taxon>Gammaproteobacteria</taxon>
        <taxon>Enterobacterales</taxon>
        <taxon>Enterobacteriaceae</taxon>
        <taxon>Shigella</taxon>
    </lineage>
</organism>
<reference key="1">
    <citation type="journal article" date="2005" name="Nucleic Acids Res.">
        <title>Genome dynamics and diversity of Shigella species, the etiologic agents of bacillary dysentery.</title>
        <authorList>
            <person name="Yang F."/>
            <person name="Yang J."/>
            <person name="Zhang X."/>
            <person name="Chen L."/>
            <person name="Jiang Y."/>
            <person name="Yan Y."/>
            <person name="Tang X."/>
            <person name="Wang J."/>
            <person name="Xiong Z."/>
            <person name="Dong J."/>
            <person name="Xue Y."/>
            <person name="Zhu Y."/>
            <person name="Xu X."/>
            <person name="Sun L."/>
            <person name="Chen S."/>
            <person name="Nie H."/>
            <person name="Peng J."/>
            <person name="Xu J."/>
            <person name="Wang Y."/>
            <person name="Yuan Z."/>
            <person name="Wen Y."/>
            <person name="Yao Z."/>
            <person name="Shen Y."/>
            <person name="Qiang B."/>
            <person name="Hou Y."/>
            <person name="Yu J."/>
            <person name="Jin Q."/>
        </authorList>
    </citation>
    <scope>NUCLEOTIDE SEQUENCE [LARGE SCALE GENOMIC DNA]</scope>
    <source>
        <strain>Ss046</strain>
    </source>
</reference>
<keyword id="KW-0028">Amino-acid biosynthesis</keyword>
<keyword id="KW-0963">Cytoplasm</keyword>
<keyword id="KW-0220">Diaminopimelate biosynthesis</keyword>
<keyword id="KW-0457">Lysine biosynthesis</keyword>
<keyword id="KW-0520">NAD</keyword>
<keyword id="KW-0521">NADP</keyword>
<keyword id="KW-0560">Oxidoreductase</keyword>
<keyword id="KW-1185">Reference proteome</keyword>
<evidence type="ECO:0000255" key="1">
    <source>
        <dbReference type="HAMAP-Rule" id="MF_00102"/>
    </source>
</evidence>
<evidence type="ECO:0000305" key="2"/>
<gene>
    <name evidence="1" type="primary">dapB</name>
    <name type="ordered locus">SSON_0036</name>
</gene>
<protein>
    <recommendedName>
        <fullName evidence="1">4-hydroxy-tetrahydrodipicolinate reductase</fullName>
        <shortName evidence="1">HTPA reductase</shortName>
        <ecNumber evidence="1">1.17.1.8</ecNumber>
    </recommendedName>
</protein>
<accession>Q3Z5X9</accession>
<feature type="chain" id="PRO_0000228388" description="4-hydroxy-tetrahydrodipicolinate reductase">
    <location>
        <begin position="1"/>
        <end position="273"/>
    </location>
</feature>
<feature type="active site" description="Proton donor/acceptor" evidence="1">
    <location>
        <position position="159"/>
    </location>
</feature>
<feature type="active site" description="Proton donor" evidence="1">
    <location>
        <position position="163"/>
    </location>
</feature>
<feature type="binding site" evidence="1">
    <location>
        <begin position="12"/>
        <end position="17"/>
    </location>
    <ligand>
        <name>NAD(+)</name>
        <dbReference type="ChEBI" id="CHEBI:57540"/>
    </ligand>
</feature>
<feature type="binding site" evidence="1">
    <location>
        <position position="38"/>
    </location>
    <ligand>
        <name>NAD(+)</name>
        <dbReference type="ChEBI" id="CHEBI:57540"/>
    </ligand>
</feature>
<feature type="binding site" evidence="1">
    <location>
        <position position="39"/>
    </location>
    <ligand>
        <name>NADP(+)</name>
        <dbReference type="ChEBI" id="CHEBI:58349"/>
    </ligand>
</feature>
<feature type="binding site" evidence="1">
    <location>
        <begin position="102"/>
        <end position="104"/>
    </location>
    <ligand>
        <name>NAD(+)</name>
        <dbReference type="ChEBI" id="CHEBI:57540"/>
    </ligand>
</feature>
<feature type="binding site" evidence="1">
    <location>
        <begin position="126"/>
        <end position="129"/>
    </location>
    <ligand>
        <name>NAD(+)</name>
        <dbReference type="ChEBI" id="CHEBI:57540"/>
    </ligand>
</feature>
<feature type="binding site" evidence="1">
    <location>
        <position position="160"/>
    </location>
    <ligand>
        <name>(S)-2,3,4,5-tetrahydrodipicolinate</name>
        <dbReference type="ChEBI" id="CHEBI:16845"/>
    </ligand>
</feature>
<feature type="binding site" evidence="1">
    <location>
        <begin position="169"/>
        <end position="170"/>
    </location>
    <ligand>
        <name>(S)-2,3,4,5-tetrahydrodipicolinate</name>
        <dbReference type="ChEBI" id="CHEBI:16845"/>
    </ligand>
</feature>
<dbReference type="EC" id="1.17.1.8" evidence="1"/>
<dbReference type="EMBL" id="CP000038">
    <property type="protein sequence ID" value="AAZ86833.1"/>
    <property type="molecule type" value="Genomic_DNA"/>
</dbReference>
<dbReference type="RefSeq" id="WP_000543599.1">
    <property type="nucleotide sequence ID" value="NC_007384.1"/>
</dbReference>
<dbReference type="SMR" id="Q3Z5X9"/>
<dbReference type="GeneID" id="93777405"/>
<dbReference type="KEGG" id="ssn:SSON_0036"/>
<dbReference type="HOGENOM" id="CLU_047479_2_1_6"/>
<dbReference type="UniPathway" id="UPA00034">
    <property type="reaction ID" value="UER00018"/>
</dbReference>
<dbReference type="Proteomes" id="UP000002529">
    <property type="component" value="Chromosome"/>
</dbReference>
<dbReference type="GO" id="GO:0005829">
    <property type="term" value="C:cytosol"/>
    <property type="evidence" value="ECO:0007669"/>
    <property type="project" value="TreeGrafter"/>
</dbReference>
<dbReference type="GO" id="GO:0008839">
    <property type="term" value="F:4-hydroxy-tetrahydrodipicolinate reductase"/>
    <property type="evidence" value="ECO:0007669"/>
    <property type="project" value="UniProtKB-EC"/>
</dbReference>
<dbReference type="GO" id="GO:0051287">
    <property type="term" value="F:NAD binding"/>
    <property type="evidence" value="ECO:0007669"/>
    <property type="project" value="UniProtKB-UniRule"/>
</dbReference>
<dbReference type="GO" id="GO:0050661">
    <property type="term" value="F:NADP binding"/>
    <property type="evidence" value="ECO:0007669"/>
    <property type="project" value="UniProtKB-UniRule"/>
</dbReference>
<dbReference type="GO" id="GO:0016726">
    <property type="term" value="F:oxidoreductase activity, acting on CH or CH2 groups, NAD or NADP as acceptor"/>
    <property type="evidence" value="ECO:0007669"/>
    <property type="project" value="UniProtKB-UniRule"/>
</dbReference>
<dbReference type="GO" id="GO:0019877">
    <property type="term" value="P:diaminopimelate biosynthetic process"/>
    <property type="evidence" value="ECO:0007669"/>
    <property type="project" value="UniProtKB-UniRule"/>
</dbReference>
<dbReference type="GO" id="GO:0009089">
    <property type="term" value="P:lysine biosynthetic process via diaminopimelate"/>
    <property type="evidence" value="ECO:0007669"/>
    <property type="project" value="UniProtKB-UniRule"/>
</dbReference>
<dbReference type="CDD" id="cd02274">
    <property type="entry name" value="DHDPR_N"/>
    <property type="match status" value="1"/>
</dbReference>
<dbReference type="FunFam" id="3.30.360.10:FF:000004">
    <property type="entry name" value="4-hydroxy-tetrahydrodipicolinate reductase"/>
    <property type="match status" value="1"/>
</dbReference>
<dbReference type="FunFam" id="3.40.50.720:FF:000048">
    <property type="entry name" value="4-hydroxy-tetrahydrodipicolinate reductase"/>
    <property type="match status" value="1"/>
</dbReference>
<dbReference type="Gene3D" id="3.30.360.10">
    <property type="entry name" value="Dihydrodipicolinate Reductase, domain 2"/>
    <property type="match status" value="1"/>
</dbReference>
<dbReference type="Gene3D" id="3.40.50.720">
    <property type="entry name" value="NAD(P)-binding Rossmann-like Domain"/>
    <property type="match status" value="1"/>
</dbReference>
<dbReference type="HAMAP" id="MF_00102">
    <property type="entry name" value="DapB"/>
    <property type="match status" value="1"/>
</dbReference>
<dbReference type="InterPro" id="IPR022663">
    <property type="entry name" value="DapB_C"/>
</dbReference>
<dbReference type="InterPro" id="IPR000846">
    <property type="entry name" value="DapB_N"/>
</dbReference>
<dbReference type="InterPro" id="IPR022664">
    <property type="entry name" value="DapB_N_CS"/>
</dbReference>
<dbReference type="InterPro" id="IPR023940">
    <property type="entry name" value="DHDPR_bac"/>
</dbReference>
<dbReference type="InterPro" id="IPR036291">
    <property type="entry name" value="NAD(P)-bd_dom_sf"/>
</dbReference>
<dbReference type="NCBIfam" id="TIGR00036">
    <property type="entry name" value="dapB"/>
    <property type="match status" value="1"/>
</dbReference>
<dbReference type="PANTHER" id="PTHR20836:SF0">
    <property type="entry name" value="4-HYDROXY-TETRAHYDRODIPICOLINATE REDUCTASE 1, CHLOROPLASTIC-RELATED"/>
    <property type="match status" value="1"/>
</dbReference>
<dbReference type="PANTHER" id="PTHR20836">
    <property type="entry name" value="DIHYDRODIPICOLINATE REDUCTASE"/>
    <property type="match status" value="1"/>
</dbReference>
<dbReference type="Pfam" id="PF05173">
    <property type="entry name" value="DapB_C"/>
    <property type="match status" value="1"/>
</dbReference>
<dbReference type="Pfam" id="PF01113">
    <property type="entry name" value="DapB_N"/>
    <property type="match status" value="1"/>
</dbReference>
<dbReference type="PIRSF" id="PIRSF000161">
    <property type="entry name" value="DHPR"/>
    <property type="match status" value="1"/>
</dbReference>
<dbReference type="SUPFAM" id="SSF55347">
    <property type="entry name" value="Glyceraldehyde-3-phosphate dehydrogenase-like, C-terminal domain"/>
    <property type="match status" value="1"/>
</dbReference>
<dbReference type="SUPFAM" id="SSF51735">
    <property type="entry name" value="NAD(P)-binding Rossmann-fold domains"/>
    <property type="match status" value="1"/>
</dbReference>
<dbReference type="PROSITE" id="PS01298">
    <property type="entry name" value="DAPB"/>
    <property type="match status" value="1"/>
</dbReference>
<proteinExistence type="inferred from homology"/>
<comment type="function">
    <text evidence="1">Catalyzes the conversion of 4-hydroxy-tetrahydrodipicolinate (HTPA) to tetrahydrodipicolinate.</text>
</comment>
<comment type="catalytic activity">
    <reaction evidence="1">
        <text>(S)-2,3,4,5-tetrahydrodipicolinate + NAD(+) + H2O = (2S,4S)-4-hydroxy-2,3,4,5-tetrahydrodipicolinate + NADH + H(+)</text>
        <dbReference type="Rhea" id="RHEA:35323"/>
        <dbReference type="ChEBI" id="CHEBI:15377"/>
        <dbReference type="ChEBI" id="CHEBI:15378"/>
        <dbReference type="ChEBI" id="CHEBI:16845"/>
        <dbReference type="ChEBI" id="CHEBI:57540"/>
        <dbReference type="ChEBI" id="CHEBI:57945"/>
        <dbReference type="ChEBI" id="CHEBI:67139"/>
        <dbReference type="EC" id="1.17.1.8"/>
    </reaction>
</comment>
<comment type="catalytic activity">
    <reaction evidence="1">
        <text>(S)-2,3,4,5-tetrahydrodipicolinate + NADP(+) + H2O = (2S,4S)-4-hydroxy-2,3,4,5-tetrahydrodipicolinate + NADPH + H(+)</text>
        <dbReference type="Rhea" id="RHEA:35331"/>
        <dbReference type="ChEBI" id="CHEBI:15377"/>
        <dbReference type="ChEBI" id="CHEBI:15378"/>
        <dbReference type="ChEBI" id="CHEBI:16845"/>
        <dbReference type="ChEBI" id="CHEBI:57783"/>
        <dbReference type="ChEBI" id="CHEBI:58349"/>
        <dbReference type="ChEBI" id="CHEBI:67139"/>
        <dbReference type="EC" id="1.17.1.8"/>
    </reaction>
</comment>
<comment type="pathway">
    <text evidence="1">Amino-acid biosynthesis; L-lysine biosynthesis via DAP pathway; (S)-tetrahydrodipicolinate from L-aspartate: step 4/4.</text>
</comment>
<comment type="subunit">
    <text evidence="1">Homotetramer.</text>
</comment>
<comment type="subcellular location">
    <subcellularLocation>
        <location evidence="1">Cytoplasm</location>
    </subcellularLocation>
</comment>
<comment type="similarity">
    <text evidence="1">Belongs to the DapB family.</text>
</comment>
<comment type="caution">
    <text evidence="2">Was originally thought to be a dihydrodipicolinate reductase (DHDPR), catalyzing the conversion of dihydrodipicolinate to tetrahydrodipicolinate. However, it was shown in E.coli that the substrate of the enzymatic reaction is not dihydrodipicolinate (DHDP) but in fact (2S,4S)-4-hydroxy-2,3,4,5-tetrahydrodipicolinic acid (HTPA), the product released by the DapA-catalyzed reaction.</text>
</comment>